<protein>
    <recommendedName>
        <fullName evidence="1">Phosphoribosylformylglycinamidine cyclo-ligase</fullName>
        <ecNumber evidence="1">6.3.3.1</ecNumber>
    </recommendedName>
    <alternativeName>
        <fullName evidence="1">AIR synthase</fullName>
    </alternativeName>
    <alternativeName>
        <fullName evidence="1">AIRS</fullName>
    </alternativeName>
    <alternativeName>
        <fullName evidence="1">Phosphoribosyl-aminoimidazole synthetase</fullName>
    </alternativeName>
</protein>
<accession>B4EY89</accession>
<proteinExistence type="inferred from homology"/>
<feature type="chain" id="PRO_1000193034" description="Phosphoribosylformylglycinamidine cyclo-ligase">
    <location>
        <begin position="1"/>
        <end position="346"/>
    </location>
</feature>
<gene>
    <name evidence="1" type="primary">purM</name>
    <name type="ordered locus">PMI1575</name>
</gene>
<organism>
    <name type="scientific">Proteus mirabilis (strain HI4320)</name>
    <dbReference type="NCBI Taxonomy" id="529507"/>
    <lineage>
        <taxon>Bacteria</taxon>
        <taxon>Pseudomonadati</taxon>
        <taxon>Pseudomonadota</taxon>
        <taxon>Gammaproteobacteria</taxon>
        <taxon>Enterobacterales</taxon>
        <taxon>Morganellaceae</taxon>
        <taxon>Proteus</taxon>
    </lineage>
</organism>
<name>PUR5_PROMH</name>
<comment type="catalytic activity">
    <reaction evidence="1">
        <text>2-formamido-N(1)-(5-O-phospho-beta-D-ribosyl)acetamidine + ATP = 5-amino-1-(5-phospho-beta-D-ribosyl)imidazole + ADP + phosphate + H(+)</text>
        <dbReference type="Rhea" id="RHEA:23032"/>
        <dbReference type="ChEBI" id="CHEBI:15378"/>
        <dbReference type="ChEBI" id="CHEBI:30616"/>
        <dbReference type="ChEBI" id="CHEBI:43474"/>
        <dbReference type="ChEBI" id="CHEBI:137981"/>
        <dbReference type="ChEBI" id="CHEBI:147287"/>
        <dbReference type="ChEBI" id="CHEBI:456216"/>
        <dbReference type="EC" id="6.3.3.1"/>
    </reaction>
</comment>
<comment type="pathway">
    <text evidence="1">Purine metabolism; IMP biosynthesis via de novo pathway; 5-amino-1-(5-phospho-D-ribosyl)imidazole from N(2)-formyl-N(1)-(5-phospho-D-ribosyl)glycinamide: step 2/2.</text>
</comment>
<comment type="subcellular location">
    <subcellularLocation>
        <location evidence="1">Cytoplasm</location>
    </subcellularLocation>
</comment>
<comment type="similarity">
    <text evidence="1">Belongs to the AIR synthase family.</text>
</comment>
<sequence length="346" mass="36777">MTNKSSLSYKDAGVDIDAGNALVDRIKSVVKETRRPEVMGGLGGFGALCAIPTKYREPILVSGTDGVGTKLRLAMDLNRHDDIGIDLVAMCVNDLIVQGAEPLFFLDYYATGKLDVDTAARVVTGIAEGCKQSGCALVGGETAEMPGMYHGNDYDIAGFCVGVVEKSQIIDGSKVKAGDALIALASSGPHSNGYSLIRKILEVSGACAETTPLGDTSLADKLLAPTRIYVKSLLSLIENVDIHAVAHITGGGFWENIPRVLPENTQARINSQSWQWPEVFNWLQQAGNVSTHEMYRTFNCGVGLLIAVSQADVEKTLSHLNACGEKAWLIGDIAPQAAGDAQVIIN</sequence>
<reference key="1">
    <citation type="journal article" date="2008" name="J. Bacteriol.">
        <title>Complete genome sequence of uropathogenic Proteus mirabilis, a master of both adherence and motility.</title>
        <authorList>
            <person name="Pearson M.M."/>
            <person name="Sebaihia M."/>
            <person name="Churcher C."/>
            <person name="Quail M.A."/>
            <person name="Seshasayee A.S."/>
            <person name="Luscombe N.M."/>
            <person name="Abdellah Z."/>
            <person name="Arrosmith C."/>
            <person name="Atkin B."/>
            <person name="Chillingworth T."/>
            <person name="Hauser H."/>
            <person name="Jagels K."/>
            <person name="Moule S."/>
            <person name="Mungall K."/>
            <person name="Norbertczak H."/>
            <person name="Rabbinowitsch E."/>
            <person name="Walker D."/>
            <person name="Whithead S."/>
            <person name="Thomson N.R."/>
            <person name="Rather P.N."/>
            <person name="Parkhill J."/>
            <person name="Mobley H.L.T."/>
        </authorList>
    </citation>
    <scope>NUCLEOTIDE SEQUENCE [LARGE SCALE GENOMIC DNA]</scope>
    <source>
        <strain>HI4320</strain>
    </source>
</reference>
<evidence type="ECO:0000255" key="1">
    <source>
        <dbReference type="HAMAP-Rule" id="MF_00741"/>
    </source>
</evidence>
<dbReference type="EC" id="6.3.3.1" evidence="1"/>
<dbReference type="EMBL" id="AM942759">
    <property type="protein sequence ID" value="CAR43299.1"/>
    <property type="molecule type" value="Genomic_DNA"/>
</dbReference>
<dbReference type="RefSeq" id="WP_004248288.1">
    <property type="nucleotide sequence ID" value="NC_010554.1"/>
</dbReference>
<dbReference type="SMR" id="B4EY89"/>
<dbReference type="EnsemblBacteria" id="CAR43299">
    <property type="protein sequence ID" value="CAR43299"/>
    <property type="gene ID" value="PMI1575"/>
</dbReference>
<dbReference type="GeneID" id="6800435"/>
<dbReference type="KEGG" id="pmr:PMI1575"/>
<dbReference type="eggNOG" id="COG0150">
    <property type="taxonomic scope" value="Bacteria"/>
</dbReference>
<dbReference type="HOGENOM" id="CLU_047116_0_0_6"/>
<dbReference type="UniPathway" id="UPA00074">
    <property type="reaction ID" value="UER00129"/>
</dbReference>
<dbReference type="Proteomes" id="UP000008319">
    <property type="component" value="Chromosome"/>
</dbReference>
<dbReference type="GO" id="GO:0005829">
    <property type="term" value="C:cytosol"/>
    <property type="evidence" value="ECO:0007669"/>
    <property type="project" value="TreeGrafter"/>
</dbReference>
<dbReference type="GO" id="GO:0005524">
    <property type="term" value="F:ATP binding"/>
    <property type="evidence" value="ECO:0007669"/>
    <property type="project" value="UniProtKB-KW"/>
</dbReference>
<dbReference type="GO" id="GO:0004637">
    <property type="term" value="F:phosphoribosylamine-glycine ligase activity"/>
    <property type="evidence" value="ECO:0007669"/>
    <property type="project" value="TreeGrafter"/>
</dbReference>
<dbReference type="GO" id="GO:0004641">
    <property type="term" value="F:phosphoribosylformylglycinamidine cyclo-ligase activity"/>
    <property type="evidence" value="ECO:0007669"/>
    <property type="project" value="UniProtKB-UniRule"/>
</dbReference>
<dbReference type="GO" id="GO:0006189">
    <property type="term" value="P:'de novo' IMP biosynthetic process"/>
    <property type="evidence" value="ECO:0007669"/>
    <property type="project" value="UniProtKB-UniRule"/>
</dbReference>
<dbReference type="GO" id="GO:0046084">
    <property type="term" value="P:adenine biosynthetic process"/>
    <property type="evidence" value="ECO:0007669"/>
    <property type="project" value="TreeGrafter"/>
</dbReference>
<dbReference type="CDD" id="cd02196">
    <property type="entry name" value="PurM"/>
    <property type="match status" value="1"/>
</dbReference>
<dbReference type="FunFam" id="3.30.1330.10:FF:000001">
    <property type="entry name" value="Phosphoribosylformylglycinamidine cyclo-ligase"/>
    <property type="match status" value="1"/>
</dbReference>
<dbReference type="FunFam" id="3.90.650.10:FF:000001">
    <property type="entry name" value="Phosphoribosylformylglycinamidine cyclo-ligase"/>
    <property type="match status" value="1"/>
</dbReference>
<dbReference type="Gene3D" id="3.90.650.10">
    <property type="entry name" value="PurM-like C-terminal domain"/>
    <property type="match status" value="1"/>
</dbReference>
<dbReference type="Gene3D" id="3.30.1330.10">
    <property type="entry name" value="PurM-like, N-terminal domain"/>
    <property type="match status" value="1"/>
</dbReference>
<dbReference type="HAMAP" id="MF_00741">
    <property type="entry name" value="AIRS"/>
    <property type="match status" value="1"/>
</dbReference>
<dbReference type="InterPro" id="IPR010918">
    <property type="entry name" value="PurM-like_C_dom"/>
</dbReference>
<dbReference type="InterPro" id="IPR036676">
    <property type="entry name" value="PurM-like_C_sf"/>
</dbReference>
<dbReference type="InterPro" id="IPR016188">
    <property type="entry name" value="PurM-like_N"/>
</dbReference>
<dbReference type="InterPro" id="IPR036921">
    <property type="entry name" value="PurM-like_N_sf"/>
</dbReference>
<dbReference type="InterPro" id="IPR004733">
    <property type="entry name" value="PurM_cligase"/>
</dbReference>
<dbReference type="NCBIfam" id="TIGR00878">
    <property type="entry name" value="purM"/>
    <property type="match status" value="1"/>
</dbReference>
<dbReference type="PANTHER" id="PTHR10520:SF12">
    <property type="entry name" value="TRIFUNCTIONAL PURINE BIOSYNTHETIC PROTEIN ADENOSINE-3"/>
    <property type="match status" value="1"/>
</dbReference>
<dbReference type="PANTHER" id="PTHR10520">
    <property type="entry name" value="TRIFUNCTIONAL PURINE BIOSYNTHETIC PROTEIN ADENOSINE-3-RELATED"/>
    <property type="match status" value="1"/>
</dbReference>
<dbReference type="Pfam" id="PF00586">
    <property type="entry name" value="AIRS"/>
    <property type="match status" value="1"/>
</dbReference>
<dbReference type="Pfam" id="PF02769">
    <property type="entry name" value="AIRS_C"/>
    <property type="match status" value="1"/>
</dbReference>
<dbReference type="SUPFAM" id="SSF56042">
    <property type="entry name" value="PurM C-terminal domain-like"/>
    <property type="match status" value="1"/>
</dbReference>
<dbReference type="SUPFAM" id="SSF55326">
    <property type="entry name" value="PurM N-terminal domain-like"/>
    <property type="match status" value="1"/>
</dbReference>
<keyword id="KW-0067">ATP-binding</keyword>
<keyword id="KW-0963">Cytoplasm</keyword>
<keyword id="KW-0436">Ligase</keyword>
<keyword id="KW-0547">Nucleotide-binding</keyword>
<keyword id="KW-0658">Purine biosynthesis</keyword>
<keyword id="KW-1185">Reference proteome</keyword>